<organism>
    <name type="scientific">Bordetella avium (strain 197N)</name>
    <dbReference type="NCBI Taxonomy" id="360910"/>
    <lineage>
        <taxon>Bacteria</taxon>
        <taxon>Pseudomonadati</taxon>
        <taxon>Pseudomonadota</taxon>
        <taxon>Betaproteobacteria</taxon>
        <taxon>Burkholderiales</taxon>
        <taxon>Alcaligenaceae</taxon>
        <taxon>Bordetella</taxon>
    </lineage>
</organism>
<evidence type="ECO:0000255" key="1">
    <source>
        <dbReference type="HAMAP-Rule" id="MF_00600"/>
    </source>
</evidence>
<keyword id="KW-0067">ATP-binding</keyword>
<keyword id="KW-0143">Chaperone</keyword>
<keyword id="KW-0963">Cytoplasm</keyword>
<keyword id="KW-0413">Isomerase</keyword>
<keyword id="KW-0547">Nucleotide-binding</keyword>
<keyword id="KW-1185">Reference proteome</keyword>
<gene>
    <name evidence="1" type="primary">groEL</name>
    <name evidence="1" type="synonym">groL</name>
    <name type="ordered locus">BAV0579</name>
</gene>
<feature type="chain" id="PRO_0000256877" description="Chaperonin GroEL">
    <location>
        <begin position="1"/>
        <end position="546"/>
    </location>
</feature>
<feature type="binding site" evidence="1">
    <location>
        <begin position="30"/>
        <end position="33"/>
    </location>
    <ligand>
        <name>ATP</name>
        <dbReference type="ChEBI" id="CHEBI:30616"/>
    </ligand>
</feature>
<feature type="binding site" evidence="1">
    <location>
        <position position="51"/>
    </location>
    <ligand>
        <name>ATP</name>
        <dbReference type="ChEBI" id="CHEBI:30616"/>
    </ligand>
</feature>
<feature type="binding site" evidence="1">
    <location>
        <begin position="87"/>
        <end position="91"/>
    </location>
    <ligand>
        <name>ATP</name>
        <dbReference type="ChEBI" id="CHEBI:30616"/>
    </ligand>
</feature>
<feature type="binding site" evidence="1">
    <location>
        <position position="415"/>
    </location>
    <ligand>
        <name>ATP</name>
        <dbReference type="ChEBI" id="CHEBI:30616"/>
    </ligand>
</feature>
<feature type="binding site" evidence="1">
    <location>
        <begin position="479"/>
        <end position="481"/>
    </location>
    <ligand>
        <name>ATP</name>
        <dbReference type="ChEBI" id="CHEBI:30616"/>
    </ligand>
</feature>
<feature type="binding site" evidence="1">
    <location>
        <position position="495"/>
    </location>
    <ligand>
        <name>ATP</name>
        <dbReference type="ChEBI" id="CHEBI:30616"/>
    </ligand>
</feature>
<comment type="function">
    <text evidence="1">Together with its co-chaperonin GroES, plays an essential role in assisting protein folding. The GroEL-GroES system forms a nano-cage that allows encapsulation of the non-native substrate proteins and provides a physical environment optimized to promote and accelerate protein folding.</text>
</comment>
<comment type="catalytic activity">
    <reaction evidence="1">
        <text>ATP + H2O + a folded polypeptide = ADP + phosphate + an unfolded polypeptide.</text>
        <dbReference type="EC" id="5.6.1.7"/>
    </reaction>
</comment>
<comment type="subunit">
    <text evidence="1">Forms a cylinder of 14 subunits composed of two heptameric rings stacked back-to-back. Interacts with the co-chaperonin GroES.</text>
</comment>
<comment type="subcellular location">
    <subcellularLocation>
        <location evidence="1">Cytoplasm</location>
    </subcellularLocation>
</comment>
<comment type="similarity">
    <text evidence="1">Belongs to the chaperonin (HSP60) family.</text>
</comment>
<dbReference type="EC" id="5.6.1.7" evidence="1"/>
<dbReference type="EMBL" id="AM167904">
    <property type="protein sequence ID" value="CAJ48184.1"/>
    <property type="molecule type" value="Genomic_DNA"/>
</dbReference>
<dbReference type="RefSeq" id="WP_012416275.1">
    <property type="nucleotide sequence ID" value="NC_010645.1"/>
</dbReference>
<dbReference type="SMR" id="Q2KXZ3"/>
<dbReference type="STRING" id="360910.BAV0579"/>
<dbReference type="GeneID" id="92936242"/>
<dbReference type="KEGG" id="bav:BAV0579"/>
<dbReference type="eggNOG" id="COG0459">
    <property type="taxonomic scope" value="Bacteria"/>
</dbReference>
<dbReference type="HOGENOM" id="CLU_016503_3_0_4"/>
<dbReference type="OrthoDB" id="9766614at2"/>
<dbReference type="Proteomes" id="UP000001977">
    <property type="component" value="Chromosome"/>
</dbReference>
<dbReference type="GO" id="GO:0005737">
    <property type="term" value="C:cytoplasm"/>
    <property type="evidence" value="ECO:0007669"/>
    <property type="project" value="UniProtKB-SubCell"/>
</dbReference>
<dbReference type="GO" id="GO:0005524">
    <property type="term" value="F:ATP binding"/>
    <property type="evidence" value="ECO:0007669"/>
    <property type="project" value="UniProtKB-UniRule"/>
</dbReference>
<dbReference type="GO" id="GO:0140662">
    <property type="term" value="F:ATP-dependent protein folding chaperone"/>
    <property type="evidence" value="ECO:0007669"/>
    <property type="project" value="InterPro"/>
</dbReference>
<dbReference type="GO" id="GO:0016853">
    <property type="term" value="F:isomerase activity"/>
    <property type="evidence" value="ECO:0007669"/>
    <property type="project" value="UniProtKB-KW"/>
</dbReference>
<dbReference type="GO" id="GO:0051082">
    <property type="term" value="F:unfolded protein binding"/>
    <property type="evidence" value="ECO:0007669"/>
    <property type="project" value="UniProtKB-UniRule"/>
</dbReference>
<dbReference type="GO" id="GO:0042026">
    <property type="term" value="P:protein refolding"/>
    <property type="evidence" value="ECO:0007669"/>
    <property type="project" value="UniProtKB-UniRule"/>
</dbReference>
<dbReference type="CDD" id="cd03344">
    <property type="entry name" value="GroEL"/>
    <property type="match status" value="1"/>
</dbReference>
<dbReference type="FunFam" id="1.10.560.10:FF:000001">
    <property type="entry name" value="60 kDa chaperonin"/>
    <property type="match status" value="1"/>
</dbReference>
<dbReference type="FunFam" id="3.50.7.10:FF:000001">
    <property type="entry name" value="60 kDa chaperonin"/>
    <property type="match status" value="1"/>
</dbReference>
<dbReference type="Gene3D" id="3.50.7.10">
    <property type="entry name" value="GroEL"/>
    <property type="match status" value="1"/>
</dbReference>
<dbReference type="Gene3D" id="1.10.560.10">
    <property type="entry name" value="GroEL-like equatorial domain"/>
    <property type="match status" value="1"/>
</dbReference>
<dbReference type="Gene3D" id="3.30.260.10">
    <property type="entry name" value="TCP-1-like chaperonin intermediate domain"/>
    <property type="match status" value="1"/>
</dbReference>
<dbReference type="HAMAP" id="MF_00600">
    <property type="entry name" value="CH60"/>
    <property type="match status" value="1"/>
</dbReference>
<dbReference type="InterPro" id="IPR018370">
    <property type="entry name" value="Chaperonin_Cpn60_CS"/>
</dbReference>
<dbReference type="InterPro" id="IPR001844">
    <property type="entry name" value="Cpn60/GroEL"/>
</dbReference>
<dbReference type="InterPro" id="IPR002423">
    <property type="entry name" value="Cpn60/GroEL/TCP-1"/>
</dbReference>
<dbReference type="InterPro" id="IPR027409">
    <property type="entry name" value="GroEL-like_apical_dom_sf"/>
</dbReference>
<dbReference type="InterPro" id="IPR027413">
    <property type="entry name" value="GROEL-like_equatorial_sf"/>
</dbReference>
<dbReference type="InterPro" id="IPR027410">
    <property type="entry name" value="TCP-1-like_intermed_sf"/>
</dbReference>
<dbReference type="NCBIfam" id="TIGR02348">
    <property type="entry name" value="GroEL"/>
    <property type="match status" value="1"/>
</dbReference>
<dbReference type="NCBIfam" id="NF000592">
    <property type="entry name" value="PRK00013.1"/>
    <property type="match status" value="1"/>
</dbReference>
<dbReference type="NCBIfam" id="NF009487">
    <property type="entry name" value="PRK12849.1"/>
    <property type="match status" value="1"/>
</dbReference>
<dbReference type="NCBIfam" id="NF009488">
    <property type="entry name" value="PRK12850.1"/>
    <property type="match status" value="1"/>
</dbReference>
<dbReference type="NCBIfam" id="NF009489">
    <property type="entry name" value="PRK12851.1"/>
    <property type="match status" value="1"/>
</dbReference>
<dbReference type="PANTHER" id="PTHR45633">
    <property type="entry name" value="60 KDA HEAT SHOCK PROTEIN, MITOCHONDRIAL"/>
    <property type="match status" value="1"/>
</dbReference>
<dbReference type="Pfam" id="PF00118">
    <property type="entry name" value="Cpn60_TCP1"/>
    <property type="match status" value="1"/>
</dbReference>
<dbReference type="PRINTS" id="PR00298">
    <property type="entry name" value="CHAPERONIN60"/>
</dbReference>
<dbReference type="SUPFAM" id="SSF52029">
    <property type="entry name" value="GroEL apical domain-like"/>
    <property type="match status" value="1"/>
</dbReference>
<dbReference type="SUPFAM" id="SSF48592">
    <property type="entry name" value="GroEL equatorial domain-like"/>
    <property type="match status" value="1"/>
</dbReference>
<dbReference type="SUPFAM" id="SSF54849">
    <property type="entry name" value="GroEL-intermediate domain like"/>
    <property type="match status" value="1"/>
</dbReference>
<dbReference type="PROSITE" id="PS00296">
    <property type="entry name" value="CHAPERONINS_CPN60"/>
    <property type="match status" value="1"/>
</dbReference>
<protein>
    <recommendedName>
        <fullName evidence="1">Chaperonin GroEL</fullName>
        <ecNumber evidence="1">5.6.1.7</ecNumber>
    </recommendedName>
    <alternativeName>
        <fullName evidence="1">60 kDa chaperonin</fullName>
    </alternativeName>
    <alternativeName>
        <fullName evidence="1">Chaperonin-60</fullName>
        <shortName evidence="1">Cpn60</shortName>
    </alternativeName>
</protein>
<reference key="1">
    <citation type="journal article" date="2006" name="J. Bacteriol.">
        <title>Comparison of the genome sequence of the poultry pathogen Bordetella avium with those of B. bronchiseptica, B. pertussis, and B. parapertussis reveals extensive diversity in surface structures associated with host interaction.</title>
        <authorList>
            <person name="Sebaihia M."/>
            <person name="Preston A."/>
            <person name="Maskell D.J."/>
            <person name="Kuzmiak H."/>
            <person name="Connell T.D."/>
            <person name="King N.D."/>
            <person name="Orndorff P.E."/>
            <person name="Miyamoto D.M."/>
            <person name="Thomson N.R."/>
            <person name="Harris D."/>
            <person name="Goble A."/>
            <person name="Lord A."/>
            <person name="Murphy L."/>
            <person name="Quail M.A."/>
            <person name="Rutter S."/>
            <person name="Squares R."/>
            <person name="Squares S."/>
            <person name="Woodward J."/>
            <person name="Parkhill J."/>
            <person name="Temple L.M."/>
        </authorList>
    </citation>
    <scope>NUCLEOTIDE SEQUENCE [LARGE SCALE GENOMIC DNA]</scope>
    <source>
        <strain>197N</strain>
    </source>
</reference>
<proteinExistence type="inferred from homology"/>
<sequence>MAAKQVLFADDARVRIVRGVNVLANAVKTTLGPKGRNVVLERSFGAPTVTKDGVSVAKEIELKDKFENIGAQLVKDVASKTSDNAGDGTTTATVLAQAIVQEGLKYVAAGFNPIDLKRGIDKAVAAAVVELKKASKPVTTSKEIAQVGSISANSDSSIGQIIADAMDKVGKEGVITVEDGKSLENELDVVEGMQFDRGYLSPYFINNPEKQVAALDDPFVLIYDKKISNIRDLLPVLEQVAKSSRPLLIIAEDVEGEALATLVVNNIRGILKTTAVKAPGFGDRRKAMLEDIAILTGGTVISEETGMSLEKATLQELGQAKRIEVAKENTTIIDGAGDGKSIEARVKQIRAQIEEATSDYDREKLQERVAKLAGGVAVIRVGAATEVEMKEKKARVEDALHATRAAVEEGVVAGGGVALLRAKQAIAGLQGDTPDQNAGIKLILRAVEEPLRTIVTNAGEEASVVVNNVLNGKGNYGYNAATGEYTDLVEQGVLDPTKVTRTALQNAASVASLLLTAEAAVVELAEDKPAAPAMPGGMGGMGGMDF</sequence>
<accession>Q2KXZ3</accession>
<name>CH60_BORA1</name>